<comment type="function">
    <text evidence="1">Component of the 90S pre-ribosome involved in the maturation of rRNAs. Required for early cleavages of the pre-RNAs in the 40S ribosomal subunit maturation pathway (By similarity).</text>
</comment>
<comment type="subunit">
    <text evidence="1">Associates with 90S and pre-40S pre-ribosomal particles.</text>
</comment>
<comment type="subcellular location">
    <subcellularLocation>
        <location evidence="1">Nucleus</location>
        <location evidence="1">Nucleolus</location>
    </subcellularLocation>
</comment>
<comment type="similarity">
    <text evidence="4">Belongs to the RRP36 family.</text>
</comment>
<keyword id="KW-0175">Coiled coil</keyword>
<keyword id="KW-0539">Nucleus</keyword>
<keyword id="KW-1185">Reference proteome</keyword>
<keyword id="KW-0687">Ribonucleoprotein</keyword>
<keyword id="KW-0690">Ribosome biogenesis</keyword>
<keyword id="KW-0698">rRNA processing</keyword>
<name>RRP36_FUSV7</name>
<sequence length="310" mass="36053">MAFKRKSTALGLERRVRPRREDRWEEDPESQGSSSEDDDEVEEEGVRGQHNDEDEDEEGSDSEEGSEEEPEPEEQTPKVDLSSISFGALAKAQATLPSTSRRSKSSKTATESSRTETTPAPRKSTRSKDDPKPKRSSKHAPQEQTSKKPVSRRREILPDNRRQYRDPRFDPLVGKVDEEKASKAYAFLDEYREKEMSDLRAQIKKTKDTYAKEDMKRQLQAMESRKKARKRKEEEENLLKEHRKKEKELVAQGKTPFYLKRSEQKKQILVKRYEGMSKGQVDRAIERKRKKVAGKEKKELDWLQGARERG</sequence>
<feature type="chain" id="PRO_0000397641" description="rRNA biogenesis protein RRP36">
    <location>
        <begin position="1"/>
        <end position="310"/>
    </location>
</feature>
<feature type="region of interest" description="Disordered" evidence="3">
    <location>
        <begin position="1"/>
        <end position="175"/>
    </location>
</feature>
<feature type="region of interest" description="Disordered" evidence="3">
    <location>
        <begin position="210"/>
        <end position="240"/>
    </location>
</feature>
<feature type="region of interest" description="Disordered" evidence="3">
    <location>
        <begin position="288"/>
        <end position="310"/>
    </location>
</feature>
<feature type="coiled-coil region" evidence="2">
    <location>
        <begin position="192"/>
        <end position="253"/>
    </location>
</feature>
<feature type="compositionally biased region" description="Basic and acidic residues" evidence="3">
    <location>
        <begin position="12"/>
        <end position="23"/>
    </location>
</feature>
<feature type="compositionally biased region" description="Acidic residues" evidence="3">
    <location>
        <begin position="24"/>
        <end position="43"/>
    </location>
</feature>
<feature type="compositionally biased region" description="Acidic residues" evidence="3">
    <location>
        <begin position="52"/>
        <end position="74"/>
    </location>
</feature>
<feature type="compositionally biased region" description="Low complexity" evidence="3">
    <location>
        <begin position="106"/>
        <end position="121"/>
    </location>
</feature>
<feature type="compositionally biased region" description="Basic and acidic residues" evidence="3">
    <location>
        <begin position="152"/>
        <end position="175"/>
    </location>
</feature>
<feature type="compositionally biased region" description="Basic and acidic residues" evidence="3">
    <location>
        <begin position="231"/>
        <end position="240"/>
    </location>
</feature>
<feature type="compositionally biased region" description="Basic and acidic residues" evidence="3">
    <location>
        <begin position="293"/>
        <end position="310"/>
    </location>
</feature>
<proteinExistence type="inferred from homology"/>
<accession>C7YTL6</accession>
<gene>
    <name type="primary">RRP36</name>
    <name type="ORF">NECHADRAFT_84625</name>
</gene>
<evidence type="ECO:0000250" key="1"/>
<evidence type="ECO:0000255" key="2"/>
<evidence type="ECO:0000256" key="3">
    <source>
        <dbReference type="SAM" id="MobiDB-lite"/>
    </source>
</evidence>
<evidence type="ECO:0000305" key="4"/>
<organism>
    <name type="scientific">Fusarium vanettenii (strain ATCC MYA-4622 / CBS 123669 / FGSC 9596 / NRRL 45880 / 77-13-4)</name>
    <name type="common">Fusarium solani subsp. pisi</name>
    <dbReference type="NCBI Taxonomy" id="660122"/>
    <lineage>
        <taxon>Eukaryota</taxon>
        <taxon>Fungi</taxon>
        <taxon>Dikarya</taxon>
        <taxon>Ascomycota</taxon>
        <taxon>Pezizomycotina</taxon>
        <taxon>Sordariomycetes</taxon>
        <taxon>Hypocreomycetidae</taxon>
        <taxon>Hypocreales</taxon>
        <taxon>Nectriaceae</taxon>
        <taxon>Fusarium</taxon>
        <taxon>Fusarium solani species complex</taxon>
        <taxon>Fusarium vanettenii</taxon>
    </lineage>
</organism>
<reference key="1">
    <citation type="journal article" date="2009" name="PLoS Genet.">
        <title>The genome of Nectria haematococca: contribution of supernumerary chromosomes to gene expansion.</title>
        <authorList>
            <person name="Coleman J.J."/>
            <person name="Rounsley S.D."/>
            <person name="Rodriguez-Carres M."/>
            <person name="Kuo A."/>
            <person name="Wasmann C.C."/>
            <person name="Grimwood J."/>
            <person name="Schmutz J."/>
            <person name="Taga M."/>
            <person name="White G.J."/>
            <person name="Zhou S."/>
            <person name="Schwartz D.C."/>
            <person name="Freitag M."/>
            <person name="Ma L.-J."/>
            <person name="Danchin E.G.J."/>
            <person name="Henrissat B."/>
            <person name="Coutinho P.M."/>
            <person name="Nelson D.R."/>
            <person name="Straney D."/>
            <person name="Napoli C.A."/>
            <person name="Barker B.M."/>
            <person name="Gribskov M."/>
            <person name="Rep M."/>
            <person name="Kroken S."/>
            <person name="Molnar I."/>
            <person name="Rensing C."/>
            <person name="Kennell J.C."/>
            <person name="Zamora J."/>
            <person name="Farman M.L."/>
            <person name="Selker E.U."/>
            <person name="Salamov A."/>
            <person name="Shapiro H."/>
            <person name="Pangilinan J."/>
            <person name="Lindquist E."/>
            <person name="Lamers C."/>
            <person name="Grigoriev I.V."/>
            <person name="Geiser D.M."/>
            <person name="Covert S.F."/>
            <person name="Temporini E."/>
            <person name="VanEtten H.D."/>
        </authorList>
    </citation>
    <scope>NUCLEOTIDE SEQUENCE [LARGE SCALE GENOMIC DNA]</scope>
    <source>
        <strain>ATCC MYA-4622 / CBS 123669 / FGSC 9596 / NRRL 45880 / 77-13-4</strain>
    </source>
</reference>
<dbReference type="EMBL" id="GG698900">
    <property type="protein sequence ID" value="EEU44264.1"/>
    <property type="molecule type" value="Genomic_DNA"/>
</dbReference>
<dbReference type="RefSeq" id="XP_003049977.1">
    <property type="nucleotide sequence ID" value="XM_003049931.1"/>
</dbReference>
<dbReference type="FunCoup" id="C7YTL6">
    <property type="interactions" value="543"/>
</dbReference>
<dbReference type="STRING" id="660122.C7YTL6"/>
<dbReference type="EnsemblFungi" id="NechaT84625">
    <property type="protein sequence ID" value="NechaP84625"/>
    <property type="gene ID" value="NechaG84625"/>
</dbReference>
<dbReference type="GeneID" id="9675143"/>
<dbReference type="KEGG" id="nhe:NECHADRAFT_84625"/>
<dbReference type="VEuPathDB" id="FungiDB:NECHADRAFT_84625"/>
<dbReference type="eggNOG" id="KOG3190">
    <property type="taxonomic scope" value="Eukaryota"/>
</dbReference>
<dbReference type="HOGENOM" id="CLU_048802_0_0_1"/>
<dbReference type="InParanoid" id="C7YTL6"/>
<dbReference type="OMA" id="ERKEMPW"/>
<dbReference type="OrthoDB" id="448446at2759"/>
<dbReference type="Proteomes" id="UP000005206">
    <property type="component" value="Unassembled WGS sequence"/>
</dbReference>
<dbReference type="GO" id="GO:0030686">
    <property type="term" value="C:90S preribosome"/>
    <property type="evidence" value="ECO:0007669"/>
    <property type="project" value="TreeGrafter"/>
</dbReference>
<dbReference type="GO" id="GO:0005730">
    <property type="term" value="C:nucleolus"/>
    <property type="evidence" value="ECO:0007669"/>
    <property type="project" value="UniProtKB-SubCell"/>
</dbReference>
<dbReference type="GO" id="GO:0000462">
    <property type="term" value="P:maturation of SSU-rRNA from tricistronic rRNA transcript (SSU-rRNA, 5.8S rRNA, LSU-rRNA)"/>
    <property type="evidence" value="ECO:0007669"/>
    <property type="project" value="TreeGrafter"/>
</dbReference>
<dbReference type="InterPro" id="IPR009292">
    <property type="entry name" value="RRP36"/>
</dbReference>
<dbReference type="PANTHER" id="PTHR21738">
    <property type="entry name" value="RIBOSOMAL RNA PROCESSING PROTEIN 36 HOMOLOG"/>
    <property type="match status" value="1"/>
</dbReference>
<dbReference type="PANTHER" id="PTHR21738:SF0">
    <property type="entry name" value="RIBOSOMAL RNA PROCESSING PROTEIN 36 HOMOLOG"/>
    <property type="match status" value="1"/>
</dbReference>
<dbReference type="Pfam" id="PF06102">
    <property type="entry name" value="RRP36"/>
    <property type="match status" value="1"/>
</dbReference>
<protein>
    <recommendedName>
        <fullName>rRNA biogenesis protein RRP36</fullName>
    </recommendedName>
    <alternativeName>
        <fullName>Ribosomal RNA-processing protein 36</fullName>
    </alternativeName>
</protein>